<name>APAG_KLEP3</name>
<feature type="chain" id="PRO_1000133793" description="Protein ApaG">
    <location>
        <begin position="1"/>
        <end position="125"/>
    </location>
</feature>
<feature type="domain" description="ApaG" evidence="1">
    <location>
        <begin position="1"/>
        <end position="125"/>
    </location>
</feature>
<sequence length="125" mass="13976">MINSPRVCVQVQSVYIESQSSPEEERYVFAYTVTIRNLGRSQVQLLGRYWLITNGHGRETEVQGEGVVGEQPHIPAGGEYQYTSGAVIETPLGTMQGHYEMIDIDGAPFRIEIPVFRLAVPTLIH</sequence>
<dbReference type="EMBL" id="CP000964">
    <property type="protein sequence ID" value="ACI10100.1"/>
    <property type="molecule type" value="Genomic_DNA"/>
</dbReference>
<dbReference type="SMR" id="B5Y1Z5"/>
<dbReference type="KEGG" id="kpe:KPK_4695"/>
<dbReference type="HOGENOM" id="CLU_128074_0_0_6"/>
<dbReference type="Proteomes" id="UP000001734">
    <property type="component" value="Chromosome"/>
</dbReference>
<dbReference type="GO" id="GO:0070987">
    <property type="term" value="P:error-free translesion synthesis"/>
    <property type="evidence" value="ECO:0007669"/>
    <property type="project" value="TreeGrafter"/>
</dbReference>
<dbReference type="Gene3D" id="2.60.40.1470">
    <property type="entry name" value="ApaG domain"/>
    <property type="match status" value="1"/>
</dbReference>
<dbReference type="HAMAP" id="MF_00791">
    <property type="entry name" value="ApaG"/>
    <property type="match status" value="1"/>
</dbReference>
<dbReference type="InterPro" id="IPR007474">
    <property type="entry name" value="ApaG_domain"/>
</dbReference>
<dbReference type="InterPro" id="IPR036767">
    <property type="entry name" value="ApaG_sf"/>
</dbReference>
<dbReference type="InterPro" id="IPR023065">
    <property type="entry name" value="Uncharacterised_ApaG"/>
</dbReference>
<dbReference type="NCBIfam" id="NF003967">
    <property type="entry name" value="PRK05461.1"/>
    <property type="match status" value="1"/>
</dbReference>
<dbReference type="PANTHER" id="PTHR14289">
    <property type="entry name" value="F-BOX ONLY PROTEIN 3"/>
    <property type="match status" value="1"/>
</dbReference>
<dbReference type="PANTHER" id="PTHR14289:SF16">
    <property type="entry name" value="POLYMERASE DELTA-INTERACTING PROTEIN 2"/>
    <property type="match status" value="1"/>
</dbReference>
<dbReference type="Pfam" id="PF04379">
    <property type="entry name" value="DUF525"/>
    <property type="match status" value="1"/>
</dbReference>
<dbReference type="SUPFAM" id="SSF110069">
    <property type="entry name" value="ApaG-like"/>
    <property type="match status" value="1"/>
</dbReference>
<dbReference type="PROSITE" id="PS51087">
    <property type="entry name" value="APAG"/>
    <property type="match status" value="1"/>
</dbReference>
<evidence type="ECO:0000255" key="1">
    <source>
        <dbReference type="HAMAP-Rule" id="MF_00791"/>
    </source>
</evidence>
<organism>
    <name type="scientific">Klebsiella pneumoniae (strain 342)</name>
    <dbReference type="NCBI Taxonomy" id="507522"/>
    <lineage>
        <taxon>Bacteria</taxon>
        <taxon>Pseudomonadati</taxon>
        <taxon>Pseudomonadota</taxon>
        <taxon>Gammaproteobacteria</taxon>
        <taxon>Enterobacterales</taxon>
        <taxon>Enterobacteriaceae</taxon>
        <taxon>Klebsiella/Raoultella group</taxon>
        <taxon>Klebsiella</taxon>
        <taxon>Klebsiella pneumoniae complex</taxon>
    </lineage>
</organism>
<gene>
    <name evidence="1" type="primary">apaG</name>
    <name type="ordered locus">KPK_4695</name>
</gene>
<protein>
    <recommendedName>
        <fullName evidence="1">Protein ApaG</fullName>
    </recommendedName>
</protein>
<reference key="1">
    <citation type="journal article" date="2008" name="PLoS Genet.">
        <title>Complete genome sequence of the N2-fixing broad host range endophyte Klebsiella pneumoniae 342 and virulence predictions verified in mice.</title>
        <authorList>
            <person name="Fouts D.E."/>
            <person name="Tyler H.L."/>
            <person name="DeBoy R.T."/>
            <person name="Daugherty S."/>
            <person name="Ren Q."/>
            <person name="Badger J.H."/>
            <person name="Durkin A.S."/>
            <person name="Huot H."/>
            <person name="Shrivastava S."/>
            <person name="Kothari S."/>
            <person name="Dodson R.J."/>
            <person name="Mohamoud Y."/>
            <person name="Khouri H."/>
            <person name="Roesch L.F.W."/>
            <person name="Krogfelt K.A."/>
            <person name="Struve C."/>
            <person name="Triplett E.W."/>
            <person name="Methe B.A."/>
        </authorList>
    </citation>
    <scope>NUCLEOTIDE SEQUENCE [LARGE SCALE GENOMIC DNA]</scope>
    <source>
        <strain>342</strain>
    </source>
</reference>
<proteinExistence type="inferred from homology"/>
<accession>B5Y1Z5</accession>